<keyword id="KW-0067">ATP-binding</keyword>
<keyword id="KW-0150">Chloroplast</keyword>
<keyword id="KW-0903">Direct protein sequencing</keyword>
<keyword id="KW-0436">Ligase</keyword>
<keyword id="KW-0547">Nucleotide-binding</keyword>
<keyword id="KW-0934">Plastid</keyword>
<feature type="chain" id="PRO_0000153194" description="Probable glutamine synthetase leaf isozyme">
    <location>
        <begin position="1" status="less than"/>
        <end position="15" status="greater than"/>
    </location>
</feature>
<feature type="non-terminal residue">
    <location>
        <position position="1"/>
    </location>
</feature>
<feature type="non-terminal residue">
    <location>
        <position position="15"/>
    </location>
</feature>
<dbReference type="EC" id="6.3.1.2"/>
<dbReference type="BRENDA" id="6.3.1.2">
    <property type="organism ID" value="4852"/>
</dbReference>
<dbReference type="GO" id="GO:0009507">
    <property type="term" value="C:chloroplast"/>
    <property type="evidence" value="ECO:0007669"/>
    <property type="project" value="UniProtKB-SubCell"/>
</dbReference>
<dbReference type="GO" id="GO:0005524">
    <property type="term" value="F:ATP binding"/>
    <property type="evidence" value="ECO:0007669"/>
    <property type="project" value="UniProtKB-KW"/>
</dbReference>
<dbReference type="GO" id="GO:0004356">
    <property type="term" value="F:glutamine synthetase activity"/>
    <property type="evidence" value="ECO:0007669"/>
    <property type="project" value="UniProtKB-EC"/>
</dbReference>
<protein>
    <recommendedName>
        <fullName>Probable glutamine synthetase leaf isozyme</fullName>
        <ecNumber>6.3.1.2</ecNumber>
    </recommendedName>
    <alternativeName>
        <fullName>Glutamate--ammonia ligase</fullName>
    </alternativeName>
    <alternativeName>
        <fullName>N47/N48</fullName>
    </alternativeName>
    <alternativeName>
        <fullName>S2205/S2287</fullName>
    </alternativeName>
</protein>
<sequence length="15" mass="1614">DVNWPLGWPVGGYPG</sequence>
<name>GLNA2_PINPS</name>
<accession>P81107</accession>
<evidence type="ECO:0000250" key="1"/>
<evidence type="ECO:0000305" key="2"/>
<comment type="function">
    <text evidence="1">The light-modulated chloroplast enzyme, encoded by a nuclear gene and expressed primarily in leaves, is responsible for the reassimilation of the ammonia generated by photorespiration.</text>
</comment>
<comment type="catalytic activity">
    <reaction>
        <text>L-glutamate + NH4(+) + ATP = L-glutamine + ADP + phosphate + H(+)</text>
        <dbReference type="Rhea" id="RHEA:16169"/>
        <dbReference type="ChEBI" id="CHEBI:15378"/>
        <dbReference type="ChEBI" id="CHEBI:28938"/>
        <dbReference type="ChEBI" id="CHEBI:29985"/>
        <dbReference type="ChEBI" id="CHEBI:30616"/>
        <dbReference type="ChEBI" id="CHEBI:43474"/>
        <dbReference type="ChEBI" id="CHEBI:58359"/>
        <dbReference type="ChEBI" id="CHEBI:456216"/>
        <dbReference type="EC" id="6.3.1.2"/>
    </reaction>
</comment>
<comment type="subunit">
    <text evidence="1">Homooctamer.</text>
</comment>
<comment type="subcellular location">
    <subcellularLocation>
        <location evidence="1">Plastid</location>
        <location evidence="1">Chloroplast</location>
    </subcellularLocation>
</comment>
<comment type="miscellaneous">
    <text>On the 2D-gel the determined pI of this protein is: 5.7, its MW is: 42 kDa.</text>
</comment>
<comment type="similarity">
    <text evidence="2">Belongs to the glutamine synthetase family.</text>
</comment>
<reference key="1">
    <citation type="journal article" date="1997" name="Silvae Genet.">
        <title>Genetic analysis of needle proteins in maritime pine. 1. Mapping dominant and codominant protein markers assayed on diploid tissue, in a haploid-based genetic map.</title>
        <authorList>
            <person name="Plomion C."/>
            <person name="Costa P."/>
            <person name="Bahrman N."/>
            <person name="Frigerio J.-M."/>
        </authorList>
    </citation>
    <scope>PROTEIN SEQUENCE</scope>
    <source>
        <tissue>Needle</tissue>
    </source>
</reference>
<reference key="2">
    <citation type="journal article" date="1999" name="Electrophoresis">
        <title>Separation and characterization of needle and xylem maritime pine proteins.</title>
        <authorList>
            <person name="Costa P."/>
            <person name="Pionneau C."/>
            <person name="Bauw G."/>
            <person name="Dubos C."/>
            <person name="Bahrman N."/>
            <person name="Kremer A."/>
            <person name="Frigerio J.-M."/>
            <person name="Plomion C."/>
        </authorList>
    </citation>
    <scope>PROTEIN SEQUENCE</scope>
    <source>
        <tissue>Needle</tissue>
    </source>
</reference>
<organism>
    <name type="scientific">Pinus pinaster</name>
    <name type="common">Maritime pine</name>
    <dbReference type="NCBI Taxonomy" id="71647"/>
    <lineage>
        <taxon>Eukaryota</taxon>
        <taxon>Viridiplantae</taxon>
        <taxon>Streptophyta</taxon>
        <taxon>Embryophyta</taxon>
        <taxon>Tracheophyta</taxon>
        <taxon>Spermatophyta</taxon>
        <taxon>Pinopsida</taxon>
        <taxon>Pinidae</taxon>
        <taxon>Conifers I</taxon>
        <taxon>Pinales</taxon>
        <taxon>Pinaceae</taxon>
        <taxon>Pinus</taxon>
        <taxon>Pinus subgen. Pinus</taxon>
    </lineage>
</organism>
<proteinExistence type="evidence at protein level"/>